<name>NOP9_SCHJY</name>
<protein>
    <recommendedName>
        <fullName>Nucleolar protein 9</fullName>
    </recommendedName>
    <alternativeName>
        <fullName>Pumilio domain-containing protein nop9</fullName>
    </alternativeName>
</protein>
<feature type="chain" id="PRO_0000407833" description="Nucleolar protein 9">
    <location>
        <begin position="1"/>
        <end position="641"/>
    </location>
</feature>
<feature type="repeat" description="Pumilio 1">
    <location>
        <begin position="89"/>
        <end position="124"/>
    </location>
</feature>
<feature type="repeat" description="Pumilio 2">
    <location>
        <begin position="125"/>
        <end position="160"/>
    </location>
</feature>
<feature type="repeat" description="Pumilio 3">
    <location>
        <begin position="185"/>
        <end position="227"/>
    </location>
</feature>
<feature type="repeat" description="Pumilio 4">
    <location>
        <begin position="248"/>
        <end position="284"/>
    </location>
</feature>
<feature type="repeat" description="Pumilio 5">
    <location>
        <begin position="302"/>
        <end position="337"/>
    </location>
</feature>
<feature type="repeat" description="Pumilio 6">
    <location>
        <begin position="338"/>
        <end position="373"/>
    </location>
</feature>
<feature type="repeat" description="Pumilio 7">
    <location>
        <begin position="477"/>
        <end position="515"/>
    </location>
</feature>
<feature type="repeat" description="Pumilio 8">
    <location>
        <begin position="516"/>
        <end position="553"/>
    </location>
</feature>
<feature type="region of interest" description="Disordered" evidence="2">
    <location>
        <begin position="1"/>
        <end position="39"/>
    </location>
</feature>
<feature type="compositionally biased region" description="Basic residues" evidence="2">
    <location>
        <begin position="1"/>
        <end position="14"/>
    </location>
</feature>
<feature type="compositionally biased region" description="Acidic residues" evidence="2">
    <location>
        <begin position="20"/>
        <end position="30"/>
    </location>
</feature>
<sequence>MARKRRQRGKRHSSKKTEDVDVSEDEFEQTEEPKLGQINKYTKEPIQPFLGVLTPEEEKYFREIEETLVSHNTRDNEDTRYLVDSIFAEVSGKELQVLNNVFGSKVLEKVFTLASSQQIKNFFGALNGSYLQITQTTFGSFVLEKLLSHMGRIIDMEEKGGALDEEEGSEFVATAESLIMYMCNELRPEISALLDHKLAAHVLEKLLLLLNGQRSVQEGESKAKYVSISVPSSFKEYAYSIVESAAENLEATELRAYSVNKYASRVIQAFVRIEFERRARSKKNKATPFSDKLLLSKEYDWKELPFVETLLKDETGSRVLEVLVERMPASDLTRLENVFEGRYYRLCVHPIANFVMQKFIKRANALTVERMLNELKDSSESLVRKSFLSVLKTLLETCNEKNFHQNHLFRLIISAAKERHPKQNLFVALLRSKHKKDKNSTDGKRVLVNNFIAVQLVEEMLRVPIELSSELIESLLELEPESIVEYATETASSHIIEQILGMSDLKMAHRRRLLNAFDGHFAEIAVTAPGSHIVDKCWFATQDLPLYRSRIVAELAEAGDEVKFDFYGKKVWANWKVELYRRAADQWYRWSKEDKSEKPIMKRVRSLPPLENTFARKRTMEPSEDLGASKKTRMTAFFGTI</sequence>
<keyword id="KW-0539">Nucleus</keyword>
<keyword id="KW-1185">Reference proteome</keyword>
<keyword id="KW-0677">Repeat</keyword>
<keyword id="KW-0690">Ribosome biogenesis</keyword>
<keyword id="KW-0698">rRNA processing</keyword>
<evidence type="ECO:0000250" key="1"/>
<evidence type="ECO:0000256" key="2">
    <source>
        <dbReference type="SAM" id="MobiDB-lite"/>
    </source>
</evidence>
<evidence type="ECO:0000305" key="3"/>
<accession>B6K1Y8</accession>
<dbReference type="EMBL" id="KE651166">
    <property type="protein sequence ID" value="EEB07169.1"/>
    <property type="molecule type" value="Genomic_DNA"/>
</dbReference>
<dbReference type="RefSeq" id="XP_002173462.1">
    <property type="nucleotide sequence ID" value="XM_002173426.1"/>
</dbReference>
<dbReference type="SMR" id="B6K1Y8"/>
<dbReference type="STRING" id="402676.B6K1Y8"/>
<dbReference type="EnsemblFungi" id="EEB07169">
    <property type="protein sequence ID" value="EEB07169"/>
    <property type="gene ID" value="SJAG_02250"/>
</dbReference>
<dbReference type="GeneID" id="7050225"/>
<dbReference type="JaponicusDB" id="SJAG_02250">
    <property type="gene designation" value="nop9"/>
</dbReference>
<dbReference type="VEuPathDB" id="FungiDB:SJAG_02250"/>
<dbReference type="eggNOG" id="KOG2188">
    <property type="taxonomic scope" value="Eukaryota"/>
</dbReference>
<dbReference type="HOGENOM" id="CLU_008720_1_1_1"/>
<dbReference type="OMA" id="HHLVRNF"/>
<dbReference type="OrthoDB" id="392571at2759"/>
<dbReference type="Proteomes" id="UP000001744">
    <property type="component" value="Unassembled WGS sequence"/>
</dbReference>
<dbReference type="GO" id="GO:0030686">
    <property type="term" value="C:90S preribosome"/>
    <property type="evidence" value="ECO:0000318"/>
    <property type="project" value="GO_Central"/>
</dbReference>
<dbReference type="GO" id="GO:0005730">
    <property type="term" value="C:nucleolus"/>
    <property type="evidence" value="ECO:0000318"/>
    <property type="project" value="GO_Central"/>
</dbReference>
<dbReference type="GO" id="GO:0030688">
    <property type="term" value="C:preribosome, small subunit precursor"/>
    <property type="evidence" value="ECO:0000318"/>
    <property type="project" value="GO_Central"/>
</dbReference>
<dbReference type="GO" id="GO:0003723">
    <property type="term" value="F:RNA binding"/>
    <property type="evidence" value="ECO:0000318"/>
    <property type="project" value="GO_Central"/>
</dbReference>
<dbReference type="GO" id="GO:0000480">
    <property type="term" value="P:endonucleolytic cleavage in 5'-ETS of tricistronic rRNA transcript (SSU-rRNA, 5.8S rRNA, LSU-rRNA)"/>
    <property type="evidence" value="ECO:0000318"/>
    <property type="project" value="GO_Central"/>
</dbReference>
<dbReference type="GO" id="GO:0000447">
    <property type="term" value="P:endonucleolytic cleavage in ITS1 to separate SSU-rRNA from 5.8S rRNA and LSU-rRNA from tricistronic rRNA transcript (SSU-rRNA, 5.8S rRNA, LSU-rRNA)"/>
    <property type="evidence" value="ECO:0000318"/>
    <property type="project" value="GO_Central"/>
</dbReference>
<dbReference type="GO" id="GO:0000472">
    <property type="term" value="P:endonucleolytic cleavage to generate mature 5'-end of SSU-rRNA from (SSU-rRNA, 5.8S rRNA, LSU-rRNA)"/>
    <property type="evidence" value="ECO:0000318"/>
    <property type="project" value="GO_Central"/>
</dbReference>
<dbReference type="GO" id="GO:0000056">
    <property type="term" value="P:ribosomal small subunit export from nucleus"/>
    <property type="evidence" value="ECO:0000318"/>
    <property type="project" value="GO_Central"/>
</dbReference>
<dbReference type="Gene3D" id="1.25.10.10">
    <property type="entry name" value="Leucine-rich Repeat Variant"/>
    <property type="match status" value="2"/>
</dbReference>
<dbReference type="InterPro" id="IPR011989">
    <property type="entry name" value="ARM-like"/>
</dbReference>
<dbReference type="InterPro" id="IPR016024">
    <property type="entry name" value="ARM-type_fold"/>
</dbReference>
<dbReference type="InterPro" id="IPR040000">
    <property type="entry name" value="NOP9"/>
</dbReference>
<dbReference type="InterPro" id="IPR033133">
    <property type="entry name" value="PUM-HD"/>
</dbReference>
<dbReference type="InterPro" id="IPR001313">
    <property type="entry name" value="Pumilio_RNA-bd_rpt"/>
</dbReference>
<dbReference type="PANTHER" id="PTHR13102">
    <property type="entry name" value="NUCLEOLAR PROTEIN 9"/>
    <property type="match status" value="1"/>
</dbReference>
<dbReference type="PANTHER" id="PTHR13102:SF0">
    <property type="entry name" value="NUCLEOLAR PROTEIN 9"/>
    <property type="match status" value="1"/>
</dbReference>
<dbReference type="Pfam" id="PF22493">
    <property type="entry name" value="PUF_NOP9"/>
    <property type="match status" value="1"/>
</dbReference>
<dbReference type="SMART" id="SM00025">
    <property type="entry name" value="Pumilio"/>
    <property type="match status" value="8"/>
</dbReference>
<dbReference type="SUPFAM" id="SSF48371">
    <property type="entry name" value="ARM repeat"/>
    <property type="match status" value="2"/>
</dbReference>
<dbReference type="PROSITE" id="PS50302">
    <property type="entry name" value="PUM"/>
    <property type="match status" value="7"/>
</dbReference>
<dbReference type="PROSITE" id="PS50303">
    <property type="entry name" value="PUM_HD"/>
    <property type="match status" value="1"/>
</dbReference>
<proteinExistence type="inferred from homology"/>
<gene>
    <name type="primary">nop9</name>
    <name type="ORF">SJAG_02250</name>
</gene>
<organism>
    <name type="scientific">Schizosaccharomyces japonicus (strain yFS275 / FY16936)</name>
    <name type="common">Fission yeast</name>
    <dbReference type="NCBI Taxonomy" id="402676"/>
    <lineage>
        <taxon>Eukaryota</taxon>
        <taxon>Fungi</taxon>
        <taxon>Dikarya</taxon>
        <taxon>Ascomycota</taxon>
        <taxon>Taphrinomycotina</taxon>
        <taxon>Schizosaccharomycetes</taxon>
        <taxon>Schizosaccharomycetales</taxon>
        <taxon>Schizosaccharomycetaceae</taxon>
        <taxon>Schizosaccharomyces</taxon>
    </lineage>
</organism>
<comment type="function">
    <text evidence="1">RNA-binding nucleolar protein required for pre-rRNA processing. Involved in production of 18S rRNA and assembly of small ribosomal subunit (By similarity).</text>
</comment>
<comment type="subcellular location">
    <subcellularLocation>
        <location evidence="1">Nucleus</location>
        <location evidence="1">Nucleolus</location>
    </subcellularLocation>
</comment>
<comment type="similarity">
    <text evidence="3">Belongs to the NOP9 family.</text>
</comment>
<reference key="1">
    <citation type="journal article" date="2011" name="Science">
        <title>Comparative functional genomics of the fission yeasts.</title>
        <authorList>
            <person name="Rhind N."/>
            <person name="Chen Z."/>
            <person name="Yassour M."/>
            <person name="Thompson D.A."/>
            <person name="Haas B.J."/>
            <person name="Habib N."/>
            <person name="Wapinski I."/>
            <person name="Roy S."/>
            <person name="Lin M.F."/>
            <person name="Heiman D.I."/>
            <person name="Young S.K."/>
            <person name="Furuya K."/>
            <person name="Guo Y."/>
            <person name="Pidoux A."/>
            <person name="Chen H.M."/>
            <person name="Robbertse B."/>
            <person name="Goldberg J.M."/>
            <person name="Aoki K."/>
            <person name="Bayne E.H."/>
            <person name="Berlin A.M."/>
            <person name="Desjardins C.A."/>
            <person name="Dobbs E."/>
            <person name="Dukaj L."/>
            <person name="Fan L."/>
            <person name="FitzGerald M.G."/>
            <person name="French C."/>
            <person name="Gujja S."/>
            <person name="Hansen K."/>
            <person name="Keifenheim D."/>
            <person name="Levin J.Z."/>
            <person name="Mosher R.A."/>
            <person name="Mueller C.A."/>
            <person name="Pfiffner J."/>
            <person name="Priest M."/>
            <person name="Russ C."/>
            <person name="Smialowska A."/>
            <person name="Swoboda P."/>
            <person name="Sykes S.M."/>
            <person name="Vaughn M."/>
            <person name="Vengrova S."/>
            <person name="Yoder R."/>
            <person name="Zeng Q."/>
            <person name="Allshire R."/>
            <person name="Baulcombe D."/>
            <person name="Birren B.W."/>
            <person name="Brown W."/>
            <person name="Ekwall K."/>
            <person name="Kellis M."/>
            <person name="Leatherwood J."/>
            <person name="Levin H."/>
            <person name="Margalit H."/>
            <person name="Martienssen R."/>
            <person name="Nieduszynski C.A."/>
            <person name="Spatafora J.W."/>
            <person name="Friedman N."/>
            <person name="Dalgaard J.Z."/>
            <person name="Baumann P."/>
            <person name="Niki H."/>
            <person name="Regev A."/>
            <person name="Nusbaum C."/>
        </authorList>
    </citation>
    <scope>NUCLEOTIDE SEQUENCE [LARGE SCALE GENOMIC DNA]</scope>
    <source>
        <strain>yFS275 / FY16936</strain>
    </source>
</reference>